<proteinExistence type="inferred from homology"/>
<dbReference type="EC" id="3.2.1.18" evidence="2"/>
<dbReference type="EMBL" id="M62733">
    <property type="protein sequence ID" value="AAA47451.1"/>
    <property type="molecule type" value="Genomic_RNA"/>
</dbReference>
<dbReference type="EMBL" id="X64275">
    <property type="protein sequence ID" value="CAA45568.1"/>
    <property type="molecule type" value="Genomic_RNA"/>
</dbReference>
<dbReference type="PIR" id="A36419">
    <property type="entry name" value="HNNZ41"/>
</dbReference>
<dbReference type="SMR" id="P25180"/>
<dbReference type="CAZy" id="GH83">
    <property type="family name" value="Glycoside Hydrolase Family 83"/>
</dbReference>
<dbReference type="GlyCosmos" id="P25180">
    <property type="glycosylation" value="6 sites, No reported glycans"/>
</dbReference>
<dbReference type="KEGG" id="vg:3159468"/>
<dbReference type="OrthoDB" id="12739at10239"/>
<dbReference type="Proteomes" id="UP000108270">
    <property type="component" value="Segment"/>
</dbReference>
<dbReference type="GO" id="GO:0020002">
    <property type="term" value="C:host cell plasma membrane"/>
    <property type="evidence" value="ECO:0007669"/>
    <property type="project" value="UniProtKB-SubCell"/>
</dbReference>
<dbReference type="GO" id="GO:0016020">
    <property type="term" value="C:membrane"/>
    <property type="evidence" value="ECO:0007669"/>
    <property type="project" value="UniProtKB-KW"/>
</dbReference>
<dbReference type="GO" id="GO:0019031">
    <property type="term" value="C:viral envelope"/>
    <property type="evidence" value="ECO:0007669"/>
    <property type="project" value="UniProtKB-KW"/>
</dbReference>
<dbReference type="GO" id="GO:0055036">
    <property type="term" value="C:virion membrane"/>
    <property type="evidence" value="ECO:0007669"/>
    <property type="project" value="UniProtKB-SubCell"/>
</dbReference>
<dbReference type="GO" id="GO:0004308">
    <property type="term" value="F:exo-alpha-sialidase activity"/>
    <property type="evidence" value="ECO:0007669"/>
    <property type="project" value="UniProtKB-EC"/>
</dbReference>
<dbReference type="GO" id="GO:0046789">
    <property type="term" value="F:host cell surface receptor binding"/>
    <property type="evidence" value="ECO:0007669"/>
    <property type="project" value="InterPro"/>
</dbReference>
<dbReference type="GO" id="GO:0046718">
    <property type="term" value="P:symbiont entry into host cell"/>
    <property type="evidence" value="ECO:0007669"/>
    <property type="project" value="UniProtKB-KW"/>
</dbReference>
<dbReference type="GO" id="GO:0019062">
    <property type="term" value="P:virion attachment to host cell"/>
    <property type="evidence" value="ECO:0007669"/>
    <property type="project" value="UniProtKB-KW"/>
</dbReference>
<dbReference type="CDD" id="cd15469">
    <property type="entry name" value="HN"/>
    <property type="match status" value="1"/>
</dbReference>
<dbReference type="Gene3D" id="1.20.5.110">
    <property type="match status" value="1"/>
</dbReference>
<dbReference type="Gene3D" id="2.120.10.10">
    <property type="match status" value="1"/>
</dbReference>
<dbReference type="InterPro" id="IPR016285">
    <property type="entry name" value="Hemagglutn-neuramid"/>
</dbReference>
<dbReference type="InterPro" id="IPR000665">
    <property type="entry name" value="Hemagglutn/HN"/>
</dbReference>
<dbReference type="InterPro" id="IPR036278">
    <property type="entry name" value="Sialidase_sf"/>
</dbReference>
<dbReference type="Pfam" id="PF00423">
    <property type="entry name" value="HN"/>
    <property type="match status" value="1"/>
</dbReference>
<dbReference type="PIRSF" id="PIRSF001072">
    <property type="entry name" value="Hemagglut-neuramid_paramyxoV"/>
    <property type="match status" value="1"/>
</dbReference>
<dbReference type="SUPFAM" id="SSF50939">
    <property type="entry name" value="Sialidases"/>
    <property type="match status" value="1"/>
</dbReference>
<organismHost>
    <name type="scientific">Simiiformes</name>
    <dbReference type="NCBI Taxonomy" id="314293"/>
</organismHost>
<keyword id="KW-1015">Disulfide bond</keyword>
<keyword id="KW-0325">Glycoprotein</keyword>
<keyword id="KW-0348">Hemagglutinin</keyword>
<keyword id="KW-1032">Host cell membrane</keyword>
<keyword id="KW-1043">Host membrane</keyword>
<keyword id="KW-0945">Host-virus interaction</keyword>
<keyword id="KW-0378">Hydrolase</keyword>
<keyword id="KW-0472">Membrane</keyword>
<keyword id="KW-1185">Reference proteome</keyword>
<keyword id="KW-0735">Signal-anchor</keyword>
<keyword id="KW-0812">Transmembrane</keyword>
<keyword id="KW-1133">Transmembrane helix</keyword>
<keyword id="KW-1161">Viral attachment to host cell</keyword>
<keyword id="KW-0261">Viral envelope protein</keyword>
<keyword id="KW-0946">Virion</keyword>
<keyword id="KW-1160">Virus entry into host cell</keyword>
<reference key="1">
    <citation type="journal article" date="1990" name="Virology">
        <title>Antigenic and structural properties of a paramyxovirus simian virus 41 (SV41) reveal a close relationship with human parainfluenza type 2 virus.</title>
        <authorList>
            <person name="Tsurudome M."/>
            <person name="Bando H."/>
            <person name="Nishio M."/>
            <person name="Iwamoto Y."/>
            <person name="Kawano M."/>
            <person name="Kondo K."/>
            <person name="Komada H."/>
            <person name="Ito Y."/>
        </authorList>
    </citation>
    <scope>NUCLEOTIDE SEQUENCE [GENOMIC RNA]</scope>
    <source>
        <strain>Toshiba/Chanock</strain>
    </source>
</reference>
<organism>
    <name type="scientific">Simian virus 41</name>
    <name type="common">SV41</name>
    <dbReference type="NCBI Taxonomy" id="3052561"/>
    <lineage>
        <taxon>Viruses</taxon>
        <taxon>Riboviria</taxon>
        <taxon>Orthornavirae</taxon>
        <taxon>Negarnaviricota</taxon>
        <taxon>Haploviricotina</taxon>
        <taxon>Monjiviricetes</taxon>
        <taxon>Mononegavirales</taxon>
        <taxon>Paramyxoviridae</taxon>
        <taxon>Rubulavirinae</taxon>
        <taxon>Orthorubulavirus</taxon>
    </lineage>
</organism>
<comment type="function">
    <text evidence="1">Attaches the virus to sialic acid-containing cell receptors and thereby initiating infection. Binding of HN protein to the receptor induces a conformational change that allows the F protein to trigger virion/cell membranes fusion (By similarity).</text>
</comment>
<comment type="function">
    <text evidence="1">Neuraminidase activity ensures the efficient spread of the virus by dissociating the mature virions from the neuraminic acid containing glycoproteins.</text>
</comment>
<comment type="catalytic activity">
    <reaction evidence="2">
        <text>Hydrolysis of alpha-(2-&gt;3)-, alpha-(2-&gt;6)-, alpha-(2-&gt;8)- glycosidic linkages of terminal sialic acid residues in oligosaccharides, glycoproteins, glycolipids, colominic acid and synthetic substrates.</text>
        <dbReference type="EC" id="3.2.1.18"/>
    </reaction>
</comment>
<comment type="subunit">
    <text evidence="4">Homotetramer; composed of disulfide-linked homodimers.</text>
</comment>
<comment type="subcellular location">
    <subcellularLocation>
        <location evidence="6">Virion membrane</location>
        <topology evidence="6">Single-pass type II membrane protein</topology>
    </subcellularLocation>
    <subcellularLocation>
        <location evidence="6">Host cell membrane</location>
        <topology evidence="6">Single-pass type II membrane protein</topology>
    </subcellularLocation>
</comment>
<comment type="domain">
    <text evidence="4">The C-terminus (head domain) is involved in binding the cellular receptor.</text>
</comment>
<comment type="similarity">
    <text evidence="6">Belongs to the paramyxoviruses hemagglutinin-neuraminidase family.</text>
</comment>
<gene>
    <name type="primary">HN</name>
</gene>
<name>HN_SV41</name>
<sequence>MSGAEGNTNKRTFRAVFRTLIILITLTILALSAAILYEVTHTSNGSESNNQVFDPTDTLNAITGNIKSMIALLNQILYNAAIALPLKIDSTESVLLAAIKDLQFSNPASQNCSSGGNLLNDALYINGINQYLLSNSFAGTVGLGPLLNIPSFIPSATAPGGCTRIPSFSLTKTHWCYSHNVILAGCADSKASNQYLAMGIVEQSSADFPFFRTMRTLYLSDGINRKSCSIVAIPGGCALYCYVATKTEQEDYAATTPSELRLTFYYYNETLVERTLTIPNVTGNWATLNPAVGSGVYHLGYLAFPVYGGLIQNSAAWNSQFGSYFLPQNPAVQCSGSAEQQINTAKGSYVVNWFSGRLIQSAVLVCPLSDQLTDQCRVVLFNNSETMMGAEGRLYTIGGDLYYYQRSSSWWTASLLYKINTDFSQGLPPLIEAQWVPTYLVPRPGAQPCSAGNFCPANCITGVYADVWPMNNPFPAGSSGVNPNYLFGGAFLWADVARVNPTFYMASATQYKNTTGFPNSNQKAAYTSTTCFQNTGSKKIYCLFIIEMGSSLMGEFQIVPFLREVIIT</sequence>
<feature type="chain" id="PRO_0000142645" description="Hemagglutinin-neuraminidase">
    <location>
        <begin position="1"/>
        <end position="568"/>
    </location>
</feature>
<feature type="topological domain" description="Intravirion" evidence="5">
    <location>
        <begin position="1"/>
        <end position="18"/>
    </location>
</feature>
<feature type="transmembrane region" description="Helical" evidence="5">
    <location>
        <begin position="19"/>
        <end position="39"/>
    </location>
</feature>
<feature type="topological domain" description="Virion surface" evidence="5">
    <location>
        <begin position="40"/>
        <end position="568"/>
    </location>
</feature>
<feature type="region of interest" description="Involved in neuraminidase activity" evidence="3">
    <location>
        <begin position="224"/>
        <end position="229"/>
    </location>
</feature>
<feature type="glycosylation site" description="N-linked (GlcNAc...) asparagine; by host" evidence="5">
    <location>
        <position position="44"/>
    </location>
</feature>
<feature type="glycosylation site" description="N-linked (GlcNAc...) asparagine; by host" evidence="5">
    <location>
        <position position="111"/>
    </location>
</feature>
<feature type="glycosylation site" description="N-linked (GlcNAc...) asparagine; by host" evidence="5">
    <location>
        <position position="268"/>
    </location>
</feature>
<feature type="glycosylation site" description="N-linked (GlcNAc...) asparagine; by host" evidence="5">
    <location>
        <position position="280"/>
    </location>
</feature>
<feature type="glycosylation site" description="N-linked (GlcNAc...) asparagine; by host" evidence="5">
    <location>
        <position position="382"/>
    </location>
</feature>
<feature type="glycosylation site" description="N-linked (GlcNAc...) asparagine; by host" evidence="5">
    <location>
        <position position="513"/>
    </location>
</feature>
<feature type="disulfide bond" evidence="4">
    <location>
        <begin position="162"/>
        <end position="186"/>
    </location>
</feature>
<feature type="disulfide bond" evidence="4">
    <location>
        <begin position="176"/>
        <end position="237"/>
    </location>
</feature>
<feature type="disulfide bond" evidence="4">
    <location>
        <begin position="228"/>
        <end position="241"/>
    </location>
</feature>
<feature type="disulfide bond" evidence="4">
    <location>
        <begin position="334"/>
        <end position="455"/>
    </location>
</feature>
<feature type="disulfide bond" evidence="4">
    <location>
        <begin position="366"/>
        <end position="376"/>
    </location>
</feature>
<feature type="disulfide bond" evidence="4">
    <location>
        <begin position="449"/>
        <end position="459"/>
    </location>
</feature>
<feature type="disulfide bond" evidence="4">
    <location>
        <begin position="531"/>
        <end position="542"/>
    </location>
</feature>
<evidence type="ECO:0000250" key="1"/>
<evidence type="ECO:0000250" key="2">
    <source>
        <dbReference type="UniProtKB" id="P25465"/>
    </source>
</evidence>
<evidence type="ECO:0000250" key="3">
    <source>
        <dbReference type="UniProtKB" id="Q91UL0"/>
    </source>
</evidence>
<evidence type="ECO:0000250" key="4">
    <source>
        <dbReference type="UniProtKB" id="Q9WAF5"/>
    </source>
</evidence>
<evidence type="ECO:0000255" key="5"/>
<evidence type="ECO:0000305" key="6"/>
<protein>
    <recommendedName>
        <fullName>Hemagglutinin-neuraminidase</fullName>
        <ecNumber evidence="2">3.2.1.18</ecNumber>
    </recommendedName>
</protein>
<accession>P25180</accession>